<evidence type="ECO:0000255" key="1"/>
<evidence type="ECO:0000255" key="2">
    <source>
        <dbReference type="PROSITE-ProRule" id="PRU00442"/>
    </source>
</evidence>
<evidence type="ECO:0000269" key="3">
    <source>
    </source>
</evidence>
<evidence type="ECO:0000269" key="4">
    <source>
    </source>
</evidence>
<evidence type="ECO:0000303" key="5">
    <source>
    </source>
</evidence>
<evidence type="ECO:0000305" key="6"/>
<evidence type="ECO:0000305" key="7">
    <source>
    </source>
</evidence>
<evidence type="ECO:0000312" key="8">
    <source>
        <dbReference type="EMBL" id="CAB12662.1"/>
    </source>
</evidence>
<dbReference type="EMBL" id="D78508">
    <property type="protein sequence ID" value="BAA11404.1"/>
    <property type="molecule type" value="Genomic_DNA"/>
</dbReference>
<dbReference type="EMBL" id="AL009126">
    <property type="protein sequence ID" value="CAB12662.1"/>
    <property type="molecule type" value="Genomic_DNA"/>
</dbReference>
<dbReference type="PIR" id="A69804">
    <property type="entry name" value="A69804"/>
</dbReference>
<dbReference type="RefSeq" id="NP_388714.1">
    <property type="nucleotide sequence ID" value="NC_000964.3"/>
</dbReference>
<dbReference type="RefSeq" id="WP_003243650.1">
    <property type="nucleotide sequence ID" value="NZ_OZ025638.1"/>
</dbReference>
<dbReference type="SMR" id="P94442"/>
<dbReference type="FunCoup" id="P94442">
    <property type="interactions" value="174"/>
</dbReference>
<dbReference type="STRING" id="224308.BSU08330"/>
<dbReference type="TCDB" id="3.A.1.105.19">
    <property type="family name" value="the atp-binding cassette (abc) superfamily"/>
</dbReference>
<dbReference type="PaxDb" id="224308-BSU08330"/>
<dbReference type="EnsemblBacteria" id="CAB12662">
    <property type="protein sequence ID" value="CAB12662"/>
    <property type="gene ID" value="BSU_08330"/>
</dbReference>
<dbReference type="GeneID" id="939705"/>
<dbReference type="KEGG" id="bsu:BSU08330"/>
<dbReference type="PATRIC" id="fig|224308.179.peg.900"/>
<dbReference type="eggNOG" id="COG0842">
    <property type="taxonomic scope" value="Bacteria"/>
</dbReference>
<dbReference type="InParanoid" id="P94442"/>
<dbReference type="OrthoDB" id="266913at2"/>
<dbReference type="PhylomeDB" id="P94442"/>
<dbReference type="BioCyc" id="BSUB:BSU08330-MONOMER"/>
<dbReference type="Proteomes" id="UP000001570">
    <property type="component" value="Chromosome"/>
</dbReference>
<dbReference type="GO" id="GO:0005886">
    <property type="term" value="C:plasma membrane"/>
    <property type="evidence" value="ECO:0000318"/>
    <property type="project" value="GO_Central"/>
</dbReference>
<dbReference type="GO" id="GO:0140359">
    <property type="term" value="F:ABC-type transporter activity"/>
    <property type="evidence" value="ECO:0007669"/>
    <property type="project" value="InterPro"/>
</dbReference>
<dbReference type="Gene3D" id="3.40.1710.10">
    <property type="entry name" value="abc type-2 transporter like domain"/>
    <property type="match status" value="1"/>
</dbReference>
<dbReference type="InterPro" id="IPR051449">
    <property type="entry name" value="ABC-2_transporter_component"/>
</dbReference>
<dbReference type="InterPro" id="IPR013525">
    <property type="entry name" value="ABC2_TM"/>
</dbReference>
<dbReference type="InterPro" id="IPR047817">
    <property type="entry name" value="ABC2_TM_bact-type"/>
</dbReference>
<dbReference type="PANTHER" id="PTHR30294:SF45">
    <property type="entry name" value="LINEARMYCIN RESISTANCE PERMEASE PROTEIN LNRN"/>
    <property type="match status" value="1"/>
</dbReference>
<dbReference type="PANTHER" id="PTHR30294">
    <property type="entry name" value="MEMBRANE COMPONENT OF ABC TRANSPORTER YHHJ-RELATED"/>
    <property type="match status" value="1"/>
</dbReference>
<dbReference type="Pfam" id="PF12698">
    <property type="entry name" value="ABC2_membrane_3"/>
    <property type="match status" value="1"/>
</dbReference>
<dbReference type="PROSITE" id="PS51012">
    <property type="entry name" value="ABC_TM2"/>
    <property type="match status" value="1"/>
</dbReference>
<proteinExistence type="evidence at protein level"/>
<protein>
    <recommendedName>
        <fullName evidence="6">Linearmycin resistance permease protein LnrN</fullName>
    </recommendedName>
</protein>
<organism>
    <name type="scientific">Bacillus subtilis (strain 168)</name>
    <dbReference type="NCBI Taxonomy" id="224308"/>
    <lineage>
        <taxon>Bacteria</taxon>
        <taxon>Bacillati</taxon>
        <taxon>Bacillota</taxon>
        <taxon>Bacilli</taxon>
        <taxon>Bacillales</taxon>
        <taxon>Bacillaceae</taxon>
        <taxon>Bacillus</taxon>
    </lineage>
</organism>
<name>LNRN_BACSU</name>
<keyword id="KW-1003">Cell membrane</keyword>
<keyword id="KW-0472">Membrane</keyword>
<keyword id="KW-1185">Reference proteome</keyword>
<keyword id="KW-0812">Transmembrane</keyword>
<keyword id="KW-1133">Transmembrane helix</keyword>
<keyword id="KW-0813">Transport</keyword>
<gene>
    <name evidence="5" type="primary">lnrN</name>
    <name evidence="8" type="synonym">bifN</name>
    <name type="synonym">yfiN</name>
    <name type="ordered locus">BSU08330</name>
</gene>
<accession>P94442</accession>
<accession>Q796Z5</accession>
<reference key="1">
    <citation type="journal article" date="1996" name="Gene">
        <title>The Bacillus subtilis chromosome region near 78 degrees contains the genes encoding a new two-component system, three ABC transporters and a lipase.</title>
        <authorList>
            <person name="Yamamoto H."/>
            <person name="Uchiyama S."/>
            <person name="Sekiguchi J."/>
        </authorList>
    </citation>
    <scope>NUCLEOTIDE SEQUENCE [GENOMIC DNA]</scope>
    <source>
        <strain>168 / AC327</strain>
    </source>
</reference>
<reference key="2">
    <citation type="journal article" date="1997" name="Nature">
        <title>The complete genome sequence of the Gram-positive bacterium Bacillus subtilis.</title>
        <authorList>
            <person name="Kunst F."/>
            <person name="Ogasawara N."/>
            <person name="Moszer I."/>
            <person name="Albertini A.M."/>
            <person name="Alloni G."/>
            <person name="Azevedo V."/>
            <person name="Bertero M.G."/>
            <person name="Bessieres P."/>
            <person name="Bolotin A."/>
            <person name="Borchert S."/>
            <person name="Borriss R."/>
            <person name="Boursier L."/>
            <person name="Brans A."/>
            <person name="Braun M."/>
            <person name="Brignell S.C."/>
            <person name="Bron S."/>
            <person name="Brouillet S."/>
            <person name="Bruschi C.V."/>
            <person name="Caldwell B."/>
            <person name="Capuano V."/>
            <person name="Carter N.M."/>
            <person name="Choi S.-K."/>
            <person name="Codani J.-J."/>
            <person name="Connerton I.F."/>
            <person name="Cummings N.J."/>
            <person name="Daniel R.A."/>
            <person name="Denizot F."/>
            <person name="Devine K.M."/>
            <person name="Duesterhoeft A."/>
            <person name="Ehrlich S.D."/>
            <person name="Emmerson P.T."/>
            <person name="Entian K.-D."/>
            <person name="Errington J."/>
            <person name="Fabret C."/>
            <person name="Ferrari E."/>
            <person name="Foulger D."/>
            <person name="Fritz C."/>
            <person name="Fujita M."/>
            <person name="Fujita Y."/>
            <person name="Fuma S."/>
            <person name="Galizzi A."/>
            <person name="Galleron N."/>
            <person name="Ghim S.-Y."/>
            <person name="Glaser P."/>
            <person name="Goffeau A."/>
            <person name="Golightly E.J."/>
            <person name="Grandi G."/>
            <person name="Guiseppi G."/>
            <person name="Guy B.J."/>
            <person name="Haga K."/>
            <person name="Haiech J."/>
            <person name="Harwood C.R."/>
            <person name="Henaut A."/>
            <person name="Hilbert H."/>
            <person name="Holsappel S."/>
            <person name="Hosono S."/>
            <person name="Hullo M.-F."/>
            <person name="Itaya M."/>
            <person name="Jones L.-M."/>
            <person name="Joris B."/>
            <person name="Karamata D."/>
            <person name="Kasahara Y."/>
            <person name="Klaerr-Blanchard M."/>
            <person name="Klein C."/>
            <person name="Kobayashi Y."/>
            <person name="Koetter P."/>
            <person name="Koningstein G."/>
            <person name="Krogh S."/>
            <person name="Kumano M."/>
            <person name="Kurita K."/>
            <person name="Lapidus A."/>
            <person name="Lardinois S."/>
            <person name="Lauber J."/>
            <person name="Lazarevic V."/>
            <person name="Lee S.-M."/>
            <person name="Levine A."/>
            <person name="Liu H."/>
            <person name="Masuda S."/>
            <person name="Mauel C."/>
            <person name="Medigue C."/>
            <person name="Medina N."/>
            <person name="Mellado R.P."/>
            <person name="Mizuno M."/>
            <person name="Moestl D."/>
            <person name="Nakai S."/>
            <person name="Noback M."/>
            <person name="Noone D."/>
            <person name="O'Reilly M."/>
            <person name="Ogawa K."/>
            <person name="Ogiwara A."/>
            <person name="Oudega B."/>
            <person name="Park S.-H."/>
            <person name="Parro V."/>
            <person name="Pohl T.M."/>
            <person name="Portetelle D."/>
            <person name="Porwollik S."/>
            <person name="Prescott A.M."/>
            <person name="Presecan E."/>
            <person name="Pujic P."/>
            <person name="Purnelle B."/>
            <person name="Rapoport G."/>
            <person name="Rey M."/>
            <person name="Reynolds S."/>
            <person name="Rieger M."/>
            <person name="Rivolta C."/>
            <person name="Rocha E."/>
            <person name="Roche B."/>
            <person name="Rose M."/>
            <person name="Sadaie Y."/>
            <person name="Sato T."/>
            <person name="Scanlan E."/>
            <person name="Schleich S."/>
            <person name="Schroeter R."/>
            <person name="Scoffone F."/>
            <person name="Sekiguchi J."/>
            <person name="Sekowska A."/>
            <person name="Seror S.J."/>
            <person name="Serror P."/>
            <person name="Shin B.-S."/>
            <person name="Soldo B."/>
            <person name="Sorokin A."/>
            <person name="Tacconi E."/>
            <person name="Takagi T."/>
            <person name="Takahashi H."/>
            <person name="Takemaru K."/>
            <person name="Takeuchi M."/>
            <person name="Tamakoshi A."/>
            <person name="Tanaka T."/>
            <person name="Terpstra P."/>
            <person name="Tognoni A."/>
            <person name="Tosato V."/>
            <person name="Uchiyama S."/>
            <person name="Vandenbol M."/>
            <person name="Vannier F."/>
            <person name="Vassarotti A."/>
            <person name="Viari A."/>
            <person name="Wambutt R."/>
            <person name="Wedler E."/>
            <person name="Wedler H."/>
            <person name="Weitzenegger T."/>
            <person name="Winters P."/>
            <person name="Wipat A."/>
            <person name="Yamamoto H."/>
            <person name="Yamane K."/>
            <person name="Yasumoto K."/>
            <person name="Yata K."/>
            <person name="Yoshida K."/>
            <person name="Yoshikawa H.-F."/>
            <person name="Zumstein E."/>
            <person name="Yoshikawa H."/>
            <person name="Danchin A."/>
        </authorList>
    </citation>
    <scope>NUCLEOTIDE SEQUENCE [LARGE SCALE GENOMIC DNA]</scope>
    <source>
        <strain>168</strain>
    </source>
</reference>
<reference key="3">
    <citation type="journal article" date="2015" name="PLoS Genet.">
        <title>Escape from lethal bacterial competition through coupled activation of antibiotic resistance and a mobilized subpopulation.</title>
        <authorList>
            <person name="Stubbendieck R.M."/>
            <person name="Straight P.D."/>
        </authorList>
    </citation>
    <scope>FUNCTION</scope>
</reference>
<reference key="4">
    <citation type="journal article" date="2017" name="J. Bacteriol.">
        <title>Linearmycins activate a two-component signaling system involved in bacterial competition and biofilm morphology.</title>
        <authorList>
            <person name="Stubbendieck R.M."/>
            <person name="Straight P.D."/>
        </authorList>
    </citation>
    <scope>FUNCTION</scope>
    <scope>SUBUNIT</scope>
    <scope>INDUCTION</scope>
</reference>
<feature type="chain" id="PRO_0000360052" description="Linearmycin resistance permease protein LnrN">
    <location>
        <begin position="1"/>
        <end position="385"/>
    </location>
</feature>
<feature type="transmembrane region" description="Helical" evidence="1">
    <location>
        <begin position="22"/>
        <end position="42"/>
    </location>
</feature>
<feature type="transmembrane region" description="Helical" evidence="1">
    <location>
        <begin position="198"/>
        <end position="218"/>
    </location>
</feature>
<feature type="transmembrane region" description="Helical" evidence="1">
    <location>
        <begin position="239"/>
        <end position="259"/>
    </location>
</feature>
<feature type="transmembrane region" description="Helical" evidence="1">
    <location>
        <begin position="274"/>
        <end position="294"/>
    </location>
</feature>
<feature type="transmembrane region" description="Helical" evidence="1">
    <location>
        <begin position="305"/>
        <end position="325"/>
    </location>
</feature>
<feature type="transmembrane region" description="Helical" evidence="1">
    <location>
        <begin position="360"/>
        <end position="380"/>
    </location>
</feature>
<feature type="domain" description="ABC transmembrane type-2" evidence="2">
    <location>
        <begin position="163"/>
        <end position="382"/>
    </location>
</feature>
<comment type="function">
    <text evidence="3 4">Required for resistance to linearmycins, a family of antibiotic-specialized metabolites produced by some streptomycetes (PubMed:26647299, PubMed:28461449). Part of the ABC transporter complex LnrLMN that probably facilitates linearmycin removal from the membrane. Responsible for the translocation of the substrate across the membrane (PubMed:28461449). Also mediates KinC-dependent biofilm morphology (PubMed:28461449).</text>
</comment>
<comment type="subunit">
    <text evidence="7">The complex is composed of two ATP-binding proteins (LnrL) and two transmembrane proteins (LnrM and LnrN).</text>
</comment>
<comment type="subcellular location">
    <subcellularLocation>
        <location evidence="6">Cell membrane</location>
        <topology evidence="1">Multi-pass membrane protein</topology>
    </subcellularLocation>
</comment>
<comment type="induction">
    <text evidence="4">Induced in response to linearmycins and other polyenes via the two-component regulatory system LnrJ/LnrK.</text>
</comment>
<comment type="similarity">
    <text evidence="6">Belongs to the ABC-2 integral membrane protein family.</text>
</comment>
<sequence length="385" mass="42084">MKKILAICGIELSLIFKKPQNYLIMFAAPLLLTFVFGSMLSGNDDKVRLAIVDQDDTILSQHYIRQLKAHDDMYVFENMSESKASEKLKQKKIAGIIVISRSFQTQLEKGKHPELIFRHGPELSEAPMVKQYAESALATLNIQVTAAKTASQTAGENWKAAYKTVFAKKHEDIVPAVTRQTLSDKKEGAEASDTASRAAGFSILFVMLTMMGAAGTILEARKNGVWSRLLTASVSRAEIGAGYVLSFFVIGWIQFGILLLSTHWLFGINWGNPAAVIVLVSLFLLTVVGIGLMIAANVRTPEQQLAFGNLFVIATCMVSGMYWPIDIEPKFMQSIAEFLPQKWAMSGLTEIIANGARVTDILGICGILLAFAAITFAAGLKALRA</sequence>